<comment type="function">
    <text evidence="1">Catalyzes the isomerization between 2-isopropylmalate and 3-isopropylmalate, via the formation of 2-isopropylmaleate.</text>
</comment>
<comment type="catalytic activity">
    <reaction evidence="1">
        <text>(2R,3S)-3-isopropylmalate = (2S)-2-isopropylmalate</text>
        <dbReference type="Rhea" id="RHEA:32287"/>
        <dbReference type="ChEBI" id="CHEBI:1178"/>
        <dbReference type="ChEBI" id="CHEBI:35121"/>
        <dbReference type="EC" id="4.2.1.33"/>
    </reaction>
</comment>
<comment type="cofactor">
    <cofactor evidence="1">
        <name>[4Fe-4S] cluster</name>
        <dbReference type="ChEBI" id="CHEBI:49883"/>
    </cofactor>
    <text evidence="1">Binds 1 [4Fe-4S] cluster per subunit.</text>
</comment>
<comment type="pathway">
    <text evidence="1">Amino-acid biosynthesis; L-leucine biosynthesis; L-leucine from 3-methyl-2-oxobutanoate: step 2/4.</text>
</comment>
<comment type="subunit">
    <text evidence="1">Heterodimer of LeuC and LeuD.</text>
</comment>
<comment type="similarity">
    <text evidence="1">Belongs to the aconitase/IPM isomerase family. LeuC type 1 subfamily.</text>
</comment>
<sequence>MGKRLLDKLWERHVVTTNENGLDLLYIDLHLVHEVTSPQAFEGLRLTNRKVRRPDLTFATMDHNIPTKDVWNITDRIAKQQLDTLRANCKQFQVPLADIGDEEQGIVHVIGPELGLTQPGKTIVCGDSHTATHGAFGALAFGIGTSEVEHVLATQTLWQRKPKAMGIELKGKLQKGVYAKDIILHLLSKYGVAVGTGYVMEFYGETIGAMEMEERMTLCNMAIEGGAKAGIIAPDEKTFVYVKGRKYAPRDYETFEKKWFELYTDADAIYDLHISIDVTDLAPYVTWGTNPSMGVRIDEKLPEKHDVNDERAFSYMGLIPGQSTYDIPVQHVFIGSCTNSRLSDLEIAASVVKGRKVKEGVRALVVPGSKRVRDAAIQKGLHHIFEEAGFEWREPGCSMCLGMNPDQVPEGEHCASTSNRNFEGRQGKGARTHLVSPAMAAAAALYGHFVDTRKESYDGAISYS</sequence>
<protein>
    <recommendedName>
        <fullName evidence="1">3-isopropylmalate dehydratase large subunit</fullName>
        <ecNumber evidence="1">4.2.1.33</ecNumber>
    </recommendedName>
    <alternativeName>
        <fullName evidence="1">Alpha-IPM isomerase</fullName>
        <shortName evidence="1">IPMI</shortName>
    </alternativeName>
    <alternativeName>
        <fullName evidence="1">Isopropylmalate isomerase</fullName>
    </alternativeName>
</protein>
<feature type="chain" id="PRO_0000076701" description="3-isopropylmalate dehydratase large subunit">
    <location>
        <begin position="1"/>
        <end position="464"/>
    </location>
</feature>
<feature type="binding site" evidence="1">
    <location>
        <position position="337"/>
    </location>
    <ligand>
        <name>[4Fe-4S] cluster</name>
        <dbReference type="ChEBI" id="CHEBI:49883"/>
    </ligand>
</feature>
<feature type="binding site" evidence="1">
    <location>
        <position position="397"/>
    </location>
    <ligand>
        <name>[4Fe-4S] cluster</name>
        <dbReference type="ChEBI" id="CHEBI:49883"/>
    </ligand>
</feature>
<feature type="binding site" evidence="1">
    <location>
        <position position="400"/>
    </location>
    <ligand>
        <name>[4Fe-4S] cluster</name>
        <dbReference type="ChEBI" id="CHEBI:49883"/>
    </ligand>
</feature>
<proteinExistence type="inferred from homology"/>
<gene>
    <name evidence="1" type="primary">leuC</name>
    <name type="ordered locus">BT9727_1286</name>
</gene>
<reference key="1">
    <citation type="journal article" date="2006" name="J. Bacteriol.">
        <title>Pathogenomic sequence analysis of Bacillus cereus and Bacillus thuringiensis isolates closely related to Bacillus anthracis.</title>
        <authorList>
            <person name="Han C.S."/>
            <person name="Xie G."/>
            <person name="Challacombe J.F."/>
            <person name="Altherr M.R."/>
            <person name="Bhotika S.S."/>
            <person name="Bruce D."/>
            <person name="Campbell C.S."/>
            <person name="Campbell M.L."/>
            <person name="Chen J."/>
            <person name="Chertkov O."/>
            <person name="Cleland C."/>
            <person name="Dimitrijevic M."/>
            <person name="Doggett N.A."/>
            <person name="Fawcett J.J."/>
            <person name="Glavina T."/>
            <person name="Goodwin L.A."/>
            <person name="Hill K.K."/>
            <person name="Hitchcock P."/>
            <person name="Jackson P.J."/>
            <person name="Keim P."/>
            <person name="Kewalramani A.R."/>
            <person name="Longmire J."/>
            <person name="Lucas S."/>
            <person name="Malfatti S."/>
            <person name="McMurry K."/>
            <person name="Meincke L.J."/>
            <person name="Misra M."/>
            <person name="Moseman B.L."/>
            <person name="Mundt M."/>
            <person name="Munk A.C."/>
            <person name="Okinaka R.T."/>
            <person name="Parson-Quintana B."/>
            <person name="Reilly L.P."/>
            <person name="Richardson P."/>
            <person name="Robinson D.L."/>
            <person name="Rubin E."/>
            <person name="Saunders E."/>
            <person name="Tapia R."/>
            <person name="Tesmer J.G."/>
            <person name="Thayer N."/>
            <person name="Thompson L.S."/>
            <person name="Tice H."/>
            <person name="Ticknor L.O."/>
            <person name="Wills P.L."/>
            <person name="Brettin T.S."/>
            <person name="Gilna P."/>
        </authorList>
    </citation>
    <scope>NUCLEOTIDE SEQUENCE [LARGE SCALE GENOMIC DNA]</scope>
    <source>
        <strain>97-27</strain>
    </source>
</reference>
<keyword id="KW-0004">4Fe-4S</keyword>
<keyword id="KW-0028">Amino-acid biosynthesis</keyword>
<keyword id="KW-0100">Branched-chain amino acid biosynthesis</keyword>
<keyword id="KW-0408">Iron</keyword>
<keyword id="KW-0411">Iron-sulfur</keyword>
<keyword id="KW-0432">Leucine biosynthesis</keyword>
<keyword id="KW-0456">Lyase</keyword>
<keyword id="KW-0479">Metal-binding</keyword>
<name>LEUC_BACHK</name>
<dbReference type="EC" id="4.2.1.33" evidence="1"/>
<dbReference type="EMBL" id="AE017355">
    <property type="protein sequence ID" value="AAT59416.1"/>
    <property type="molecule type" value="Genomic_DNA"/>
</dbReference>
<dbReference type="RefSeq" id="WP_000520122.1">
    <property type="nucleotide sequence ID" value="NC_005957.1"/>
</dbReference>
<dbReference type="RefSeq" id="YP_035620.1">
    <property type="nucleotide sequence ID" value="NC_005957.1"/>
</dbReference>
<dbReference type="SMR" id="Q6HLF1"/>
<dbReference type="KEGG" id="btk:BT9727_1286"/>
<dbReference type="PATRIC" id="fig|281309.8.peg.1355"/>
<dbReference type="HOGENOM" id="CLU_006714_3_4_9"/>
<dbReference type="UniPathway" id="UPA00048">
    <property type="reaction ID" value="UER00071"/>
</dbReference>
<dbReference type="Proteomes" id="UP000001301">
    <property type="component" value="Chromosome"/>
</dbReference>
<dbReference type="GO" id="GO:0003861">
    <property type="term" value="F:3-isopropylmalate dehydratase activity"/>
    <property type="evidence" value="ECO:0007669"/>
    <property type="project" value="UniProtKB-UniRule"/>
</dbReference>
<dbReference type="GO" id="GO:0051539">
    <property type="term" value="F:4 iron, 4 sulfur cluster binding"/>
    <property type="evidence" value="ECO:0007669"/>
    <property type="project" value="UniProtKB-KW"/>
</dbReference>
<dbReference type="GO" id="GO:0046872">
    <property type="term" value="F:metal ion binding"/>
    <property type="evidence" value="ECO:0007669"/>
    <property type="project" value="UniProtKB-KW"/>
</dbReference>
<dbReference type="GO" id="GO:0009098">
    <property type="term" value="P:L-leucine biosynthetic process"/>
    <property type="evidence" value="ECO:0007669"/>
    <property type="project" value="UniProtKB-UniRule"/>
</dbReference>
<dbReference type="CDD" id="cd01583">
    <property type="entry name" value="IPMI"/>
    <property type="match status" value="1"/>
</dbReference>
<dbReference type="FunFam" id="3.30.499.10:FF:000007">
    <property type="entry name" value="3-isopropylmalate dehydratase large subunit"/>
    <property type="match status" value="1"/>
</dbReference>
<dbReference type="Gene3D" id="3.30.499.10">
    <property type="entry name" value="Aconitase, domain 3"/>
    <property type="match status" value="2"/>
</dbReference>
<dbReference type="HAMAP" id="MF_01026">
    <property type="entry name" value="LeuC_type1"/>
    <property type="match status" value="1"/>
</dbReference>
<dbReference type="InterPro" id="IPR004430">
    <property type="entry name" value="3-IsopropMal_deHydase_lsu"/>
</dbReference>
<dbReference type="InterPro" id="IPR015931">
    <property type="entry name" value="Acnase/IPM_dHydase_lsu_aba_1/3"/>
</dbReference>
<dbReference type="InterPro" id="IPR001030">
    <property type="entry name" value="Acoase/IPM_deHydtase_lsu_aba"/>
</dbReference>
<dbReference type="InterPro" id="IPR018136">
    <property type="entry name" value="Aconitase_4Fe-4S_BS"/>
</dbReference>
<dbReference type="InterPro" id="IPR036008">
    <property type="entry name" value="Aconitase_4Fe-4S_dom"/>
</dbReference>
<dbReference type="InterPro" id="IPR050067">
    <property type="entry name" value="IPM_dehydratase_rel_enz"/>
</dbReference>
<dbReference type="InterPro" id="IPR033941">
    <property type="entry name" value="IPMI_cat"/>
</dbReference>
<dbReference type="NCBIfam" id="TIGR00170">
    <property type="entry name" value="leuC"/>
    <property type="match status" value="1"/>
</dbReference>
<dbReference type="NCBIfam" id="NF004016">
    <property type="entry name" value="PRK05478.1"/>
    <property type="match status" value="1"/>
</dbReference>
<dbReference type="NCBIfam" id="NF009116">
    <property type="entry name" value="PRK12466.1"/>
    <property type="match status" value="1"/>
</dbReference>
<dbReference type="PANTHER" id="PTHR43822:SF9">
    <property type="entry name" value="3-ISOPROPYLMALATE DEHYDRATASE"/>
    <property type="match status" value="1"/>
</dbReference>
<dbReference type="PANTHER" id="PTHR43822">
    <property type="entry name" value="HOMOACONITASE, MITOCHONDRIAL-RELATED"/>
    <property type="match status" value="1"/>
</dbReference>
<dbReference type="Pfam" id="PF00330">
    <property type="entry name" value="Aconitase"/>
    <property type="match status" value="1"/>
</dbReference>
<dbReference type="PRINTS" id="PR00415">
    <property type="entry name" value="ACONITASE"/>
</dbReference>
<dbReference type="SUPFAM" id="SSF53732">
    <property type="entry name" value="Aconitase iron-sulfur domain"/>
    <property type="match status" value="1"/>
</dbReference>
<dbReference type="PROSITE" id="PS00450">
    <property type="entry name" value="ACONITASE_1"/>
    <property type="match status" value="1"/>
</dbReference>
<dbReference type="PROSITE" id="PS01244">
    <property type="entry name" value="ACONITASE_2"/>
    <property type="match status" value="1"/>
</dbReference>
<evidence type="ECO:0000255" key="1">
    <source>
        <dbReference type="HAMAP-Rule" id="MF_01026"/>
    </source>
</evidence>
<accession>Q6HLF1</accession>
<organism>
    <name type="scientific">Bacillus thuringiensis subsp. konkukian (strain 97-27)</name>
    <dbReference type="NCBI Taxonomy" id="281309"/>
    <lineage>
        <taxon>Bacteria</taxon>
        <taxon>Bacillati</taxon>
        <taxon>Bacillota</taxon>
        <taxon>Bacilli</taxon>
        <taxon>Bacillales</taxon>
        <taxon>Bacillaceae</taxon>
        <taxon>Bacillus</taxon>
        <taxon>Bacillus cereus group</taxon>
    </lineage>
</organism>